<feature type="chain" id="PRO_0000091279" description="Elongation factor G, chloroplastic">
    <location>
        <begin position="1"/>
        <end position="141" status="greater than"/>
    </location>
</feature>
<feature type="domain" description="tr-type G" evidence="2">
    <location>
        <begin position="12"/>
        <end position="141" status="greater than"/>
    </location>
</feature>
<feature type="binding site" evidence="1">
    <location>
        <begin position="21"/>
        <end position="28"/>
    </location>
    <ligand>
        <name>GTP</name>
        <dbReference type="ChEBI" id="CHEBI:37565"/>
    </ligand>
</feature>
<feature type="binding site" evidence="1">
    <location>
        <begin position="85"/>
        <end position="89"/>
    </location>
    <ligand>
        <name>GTP</name>
        <dbReference type="ChEBI" id="CHEBI:37565"/>
    </ligand>
</feature>
<feature type="non-terminal residue">
    <location>
        <position position="141"/>
    </location>
</feature>
<comment type="function">
    <text evidence="1">Chloroplast-localized elongation factor EF-G involved in protein synthesis in plastids. Catalyzes the GTP-dependent ribosomal translocation step during translation elongation. During this step, the ribosome changes from the pre-translocational (PRE) to the post-translocational (POST) state as the newly formed A-site-bound peptidyl-tRNA and P-site-bound deacylated tRNA move to the P and E sites, respectively. Catalyzes the coordinated movement of the two tRNA molecules, the mRNA and conformational changes in the ribosome (By similarity).</text>
</comment>
<comment type="pathway">
    <text>Protein biosynthesis; polypeptide chain elongation.</text>
</comment>
<comment type="subcellular location">
    <subcellularLocation>
        <location evidence="1">Plastid</location>
        <location evidence="1">Chloroplast</location>
    </subcellularLocation>
</comment>
<comment type="similarity">
    <text evidence="2">Belongs to the TRAFAC class translation factor GTPase superfamily. Classic translation factor GTPase family. EF-G/EF-2 subfamily.</text>
</comment>
<keyword id="KW-0150">Chloroplast</keyword>
<keyword id="KW-0903">Direct protein sequencing</keyword>
<keyword id="KW-0251">Elongation factor</keyword>
<keyword id="KW-0342">GTP-binding</keyword>
<keyword id="KW-0547">Nucleotide-binding</keyword>
<keyword id="KW-0934">Plastid</keyword>
<keyword id="KW-0648">Protein biosynthesis</keyword>
<organism>
    <name type="scientific">Pisum sativum</name>
    <name type="common">Garden pea</name>
    <name type="synonym">Lathyrus oleraceus</name>
    <dbReference type="NCBI Taxonomy" id="3888"/>
    <lineage>
        <taxon>Eukaryota</taxon>
        <taxon>Viridiplantae</taxon>
        <taxon>Streptophyta</taxon>
        <taxon>Embryophyta</taxon>
        <taxon>Tracheophyta</taxon>
        <taxon>Spermatophyta</taxon>
        <taxon>Magnoliopsida</taxon>
        <taxon>eudicotyledons</taxon>
        <taxon>Gunneridae</taxon>
        <taxon>Pentapetalae</taxon>
        <taxon>rosids</taxon>
        <taxon>fabids</taxon>
        <taxon>Fabales</taxon>
        <taxon>Fabaceae</taxon>
        <taxon>Papilionoideae</taxon>
        <taxon>50 kb inversion clade</taxon>
        <taxon>NPAAA clade</taxon>
        <taxon>Hologalegina</taxon>
        <taxon>IRL clade</taxon>
        <taxon>Fabeae</taxon>
        <taxon>Pisum</taxon>
    </lineage>
</organism>
<gene>
    <name type="primary">fusA</name>
</gene>
<name>EFGC_PEA</name>
<protein>
    <recommendedName>
        <fullName>Elongation factor G, chloroplastic</fullName>
        <shortName>cEF-G</shortName>
        <shortName>chlEF-G</shortName>
    </recommendedName>
</protein>
<dbReference type="EMBL" id="L16508">
    <property type="protein sequence ID" value="AAA33654.1"/>
    <property type="molecule type" value="mRNA"/>
</dbReference>
<dbReference type="PIR" id="S70781">
    <property type="entry name" value="S70781"/>
</dbReference>
<dbReference type="SMR" id="P35450"/>
<dbReference type="UniPathway" id="UPA00345"/>
<dbReference type="GO" id="GO:0009507">
    <property type="term" value="C:chloroplast"/>
    <property type="evidence" value="ECO:0007669"/>
    <property type="project" value="UniProtKB-SubCell"/>
</dbReference>
<dbReference type="GO" id="GO:0005525">
    <property type="term" value="F:GTP binding"/>
    <property type="evidence" value="ECO:0007669"/>
    <property type="project" value="UniProtKB-KW"/>
</dbReference>
<dbReference type="GO" id="GO:0003924">
    <property type="term" value="F:GTPase activity"/>
    <property type="evidence" value="ECO:0007669"/>
    <property type="project" value="InterPro"/>
</dbReference>
<dbReference type="GO" id="GO:0003746">
    <property type="term" value="F:translation elongation factor activity"/>
    <property type="evidence" value="ECO:0007669"/>
    <property type="project" value="UniProtKB-KW"/>
</dbReference>
<dbReference type="GO" id="GO:0032790">
    <property type="term" value="P:ribosome disassembly"/>
    <property type="evidence" value="ECO:0007669"/>
    <property type="project" value="TreeGrafter"/>
</dbReference>
<dbReference type="Gene3D" id="3.40.50.300">
    <property type="entry name" value="P-loop containing nucleotide triphosphate hydrolases"/>
    <property type="match status" value="2"/>
</dbReference>
<dbReference type="InterPro" id="IPR031157">
    <property type="entry name" value="G_TR_CS"/>
</dbReference>
<dbReference type="InterPro" id="IPR027417">
    <property type="entry name" value="P-loop_NTPase"/>
</dbReference>
<dbReference type="InterPro" id="IPR005225">
    <property type="entry name" value="Small_GTP-bd"/>
</dbReference>
<dbReference type="InterPro" id="IPR000795">
    <property type="entry name" value="T_Tr_GTP-bd_dom"/>
</dbReference>
<dbReference type="NCBIfam" id="TIGR00231">
    <property type="entry name" value="small_GTP"/>
    <property type="match status" value="1"/>
</dbReference>
<dbReference type="PANTHER" id="PTHR43261:SF1">
    <property type="entry name" value="RIBOSOME-RELEASING FACTOR 2, MITOCHONDRIAL"/>
    <property type="match status" value="1"/>
</dbReference>
<dbReference type="PANTHER" id="PTHR43261">
    <property type="entry name" value="TRANSLATION ELONGATION FACTOR G-RELATED"/>
    <property type="match status" value="1"/>
</dbReference>
<dbReference type="Pfam" id="PF00009">
    <property type="entry name" value="GTP_EFTU"/>
    <property type="match status" value="1"/>
</dbReference>
<dbReference type="PRINTS" id="PR00315">
    <property type="entry name" value="ELONGATNFCT"/>
</dbReference>
<dbReference type="SUPFAM" id="SSF52540">
    <property type="entry name" value="P-loop containing nucleoside triphosphate hydrolases"/>
    <property type="match status" value="1"/>
</dbReference>
<dbReference type="PROSITE" id="PS00301">
    <property type="entry name" value="G_TR_1"/>
    <property type="match status" value="1"/>
</dbReference>
<dbReference type="PROSITE" id="PS51722">
    <property type="entry name" value="G_TR_2"/>
    <property type="match status" value="1"/>
</dbReference>
<proteinExistence type="evidence at protein level"/>
<accession>P35450</accession>
<evidence type="ECO:0000250" key="1"/>
<evidence type="ECO:0000255" key="2">
    <source>
        <dbReference type="PROSITE-ProRule" id="PRU01059"/>
    </source>
</evidence>
<reference key="1">
    <citation type="journal article" date="1994" name="Arch. Biochem. Biophys.">
        <title>Purification and N-terminal sequence analysis of pea chloroplast protein synthesis factor EF-G.</title>
        <authorList>
            <person name="Akkaya M.S."/>
            <person name="Welcsh P.L."/>
            <person name="Wolfe M.A."/>
            <person name="Duerr B.K."/>
            <person name="Becktel W.J."/>
            <person name="Breitenberger C.A."/>
        </authorList>
    </citation>
    <scope>NUCLEOTIDE SEQUENCE [MRNA]</scope>
    <scope>PROTEIN SEQUENCE OF 1-15</scope>
</reference>
<sequence length="141" mass="15977">ATEDGKRAVPLKDYRNIGIMAHIDAGKTTTTERILFYTGRNYKIGEVHEGTATMDWMEQEQERGITITSAATTTFWDKHRINIIDTPGHVDFTLEVERALRVLDGAICLFDSVAGVEPQSETVWRQADRYGVPRICFVNKM</sequence>